<protein>
    <recommendedName>
        <fullName>Chymotrypsin inhibitor</fullName>
        <shortName>LTCI</shortName>
    </recommendedName>
</protein>
<evidence type="ECO:0000250" key="1"/>
<evidence type="ECO:0000269" key="2">
    <source>
    </source>
</evidence>
<evidence type="ECO:0000305" key="3"/>
<name>ICI_LUMTE</name>
<comment type="function">
    <text evidence="2">Inhibits L.terrestris digestive chymotrypsin LT_CH 1 and bovine alpha-chymotrypsin.</text>
</comment>
<comment type="subunit">
    <text evidence="2">Monomer.</text>
</comment>
<comment type="subcellular location">
    <subcellularLocation>
        <location evidence="3">Secreted</location>
    </subcellularLocation>
</comment>
<comment type="tissue specificity">
    <text evidence="2">Expressed in the body wall, coelomocytes and at a lower level in intestine.</text>
</comment>
<comment type="similarity">
    <text evidence="3">Belongs to the protease inhibitor I13 (potato type I serine protease inhibitor) family.</text>
</comment>
<organism>
    <name type="scientific">Lumbricus terrestris</name>
    <name type="common">Common earthworm</name>
    <dbReference type="NCBI Taxonomy" id="6398"/>
    <lineage>
        <taxon>Eukaryota</taxon>
        <taxon>Metazoa</taxon>
        <taxon>Spiralia</taxon>
        <taxon>Lophotrochozoa</taxon>
        <taxon>Annelida</taxon>
        <taxon>Clitellata</taxon>
        <taxon>Oligochaeta</taxon>
        <taxon>Crassiclitellata</taxon>
        <taxon>Lumbricina</taxon>
        <taxon>Lumbricidae</taxon>
        <taxon>Lumbricinae</taxon>
        <taxon>Lumbricus</taxon>
    </lineage>
</organism>
<keyword id="KW-0903">Direct protein sequencing</keyword>
<keyword id="KW-0646">Protease inhibitor</keyword>
<keyword id="KW-0964">Secreted</keyword>
<keyword id="KW-0722">Serine protease inhibitor</keyword>
<keyword id="KW-0732">Signal</keyword>
<proteinExistence type="evidence at protein level"/>
<reference key="1">
    <citation type="journal article" date="2006" name="Comp. Biochem. Physiol.">
        <title>LTCI, a novel chymotrypsin inhibitor of the potato I family from the earthworm Lumbricus terrestris. Purification, cDNA cloning, and expression.</title>
        <authorList>
            <person name="Wojtaszek J."/>
            <person name="Kolaczkowska A."/>
            <person name="Kowalska J."/>
            <person name="Nowak K."/>
            <person name="Wilusz T."/>
        </authorList>
    </citation>
    <scope>NUCLEOTIDE SEQUENCE [MRNA]</scope>
    <scope>PROTEIN SEQUENCE OF 23-86</scope>
    <scope>FUNCTION</scope>
    <scope>SUBUNIT</scope>
    <scope>TISSUE SPECIFICITY</scope>
</reference>
<feature type="signal peptide" evidence="2">
    <location>
        <begin position="1"/>
        <end position="22"/>
    </location>
</feature>
<feature type="chain" id="PRO_0000025291" description="Chymotrypsin inhibitor">
    <location>
        <begin position="23"/>
        <end position="86"/>
    </location>
</feature>
<feature type="site" description="Reactive bond" evidence="1">
    <location>
        <begin position="62"/>
        <end position="63"/>
    </location>
</feature>
<dbReference type="EMBL" id="AY756179">
    <property type="protein sequence ID" value="AAV35366.1"/>
    <property type="molecule type" value="mRNA"/>
</dbReference>
<dbReference type="SMR" id="P83472"/>
<dbReference type="MEROPS" id="I13.015"/>
<dbReference type="GO" id="GO:0005576">
    <property type="term" value="C:extracellular region"/>
    <property type="evidence" value="ECO:0007669"/>
    <property type="project" value="UniProtKB-SubCell"/>
</dbReference>
<dbReference type="GO" id="GO:0004867">
    <property type="term" value="F:serine-type endopeptidase inhibitor activity"/>
    <property type="evidence" value="ECO:0007669"/>
    <property type="project" value="UniProtKB-KW"/>
</dbReference>
<dbReference type="GO" id="GO:0009611">
    <property type="term" value="P:response to wounding"/>
    <property type="evidence" value="ECO:0007669"/>
    <property type="project" value="InterPro"/>
</dbReference>
<dbReference type="Gene3D" id="3.30.10.10">
    <property type="entry name" value="Trypsin Inhibitor V, subunit A"/>
    <property type="match status" value="1"/>
</dbReference>
<dbReference type="InterPro" id="IPR000864">
    <property type="entry name" value="Prot_inh_pot1"/>
</dbReference>
<dbReference type="InterPro" id="IPR036354">
    <property type="entry name" value="Prot_inh_pot1_sf"/>
</dbReference>
<dbReference type="PANTHER" id="PTHR33091:SF53">
    <property type="entry name" value="OS08G0441300 PROTEIN"/>
    <property type="match status" value="1"/>
</dbReference>
<dbReference type="PANTHER" id="PTHR33091">
    <property type="entry name" value="PROTEIN, PUTATIVE, EXPRESSED-RELATED"/>
    <property type="match status" value="1"/>
</dbReference>
<dbReference type="Pfam" id="PF00280">
    <property type="entry name" value="potato_inhibit"/>
    <property type="match status" value="1"/>
</dbReference>
<dbReference type="PRINTS" id="PR00292">
    <property type="entry name" value="POTATOINHBTR"/>
</dbReference>
<dbReference type="SUPFAM" id="SSF54654">
    <property type="entry name" value="CI-2 family of serine protease inhibitors"/>
    <property type="match status" value="1"/>
</dbReference>
<accession>P83472</accession>
<accession>Q5UD33</accession>
<sequence>MKLLFAIVALLALAFLCADISAVKTSWPELVGETLEEAKAQILEDRPDAVIKVQPEHSPVTYDYRPSRVIIFVNKDGNVAETPAAG</sequence>